<accession>P77338</accession>
<accession>Q2MBW2</accession>
<organism>
    <name type="scientific">Escherichia coli (strain K12)</name>
    <dbReference type="NCBI Taxonomy" id="83333"/>
    <lineage>
        <taxon>Bacteria</taxon>
        <taxon>Pseudomonadati</taxon>
        <taxon>Pseudomonadota</taxon>
        <taxon>Gammaproteobacteria</taxon>
        <taxon>Enterobacterales</taxon>
        <taxon>Enterobacteriaceae</taxon>
        <taxon>Escherichia</taxon>
    </lineage>
</organism>
<sequence>MTMFQYYKRSRHFVFSAFIAFVFVLLCQNTAFARASSNGDLPTKADLQAQLDSLNKQKDLSAQDKLVQQDLTDTLATLDKIDRIKEETVQLRQKVAEAPEKMRQATAALTALSDVDNDEETRKILSTLSLRQLETRVAQALDDLQNAQNDLASYNSQLVSLQTQPERVQNAMYNASQQLQQIRSRLDGTDVGETALRPSQKVLMQAQQALLNAEIDQQRKSLEGNTVLQDTLQKQRDYVTANSARLEHQLQLLQEAVNSKRLTLTEKTAQEAVSPDEAARIQANPLVKQELEINQQLSQRLITATENGNQLMQQNIKVKNWLERALQSERNIKEQIAVLKGSLLLSRILYQQQQTLPSADELENMTNRIADLRLEQFEVNQQRDALFQSDAFVNKLEEGHTNEVNSEVHDALLQVVDMRRELLDQLNKQLGNQLMMAINLQINQQQLMSVSKNLKSILTQQIFWVNSNRPMDWDWIKAFPQSLKDEFKSMKITVNWQKAWPAVFIAFLAGLPLLLIAGLIHWRLGWLKAYQQKLASAVGSLRNDSQLNTPKAILIDLIRALPVCLIILAVGLILLTMQLNISELLWSFSKKLAIFWLVFGLCWKVLEKNGVAVRHFGMPEQQTSHWRRQIVRISLALLPIHFWSVVAELSPLHLMDDVLGQAMIFFNLLLIAFLVWPMCRESWRDKESHTMRLVTITVLSIIPIALMVLTATGYFYTTLRLAGRWIETVYLVIIWNLLYQTVLRGLSVAARRIAWRRALARRQNLVKEGAEGAEPPEEPTIALEQVNQQTLRITMLLMFALFGVMFWAIWSDLITVFSYLDSITLWHYNGTEAGAAVVKNVTMGSLLFAIIASMVAWALIRNLPGLLEVLVLSRLNMRQGASYAITTILNYIIIAVGAMTVFGSLGVSWDKLQWLAAALSVGLGFGLQEIFGNFVSGLIILFERPVRIGDTVTIGSFSGTVSKIRIRATTITDFDRKEVIIPNKAFVTERLINWSLTDTTTRLVIRLGVAYGSDLEKVRKVLLKAATEHPRVMHEPMPEVFFTAFGASTLDHELRLYVRELRDRSRTVDELNRTIDQLCRENDINIAFNQLEVHLHNEKGDEVTEVKRDYKGDDPTPAVG</sequence>
<reference key="1">
    <citation type="submission" date="1996-12" db="EMBL/GenBank/DDBJ databases">
        <title>Characterisation of the aefA locus of E.coli.</title>
        <authorList>
            <person name="Jones M.A."/>
            <person name="McLaggen D."/>
            <person name="Epstein W."/>
            <person name="Booth I.R."/>
        </authorList>
    </citation>
    <scope>NUCLEOTIDE SEQUENCE [GENOMIC DNA]</scope>
    <source>
        <strain>K12</strain>
    </source>
</reference>
<reference key="2">
    <citation type="submission" date="1997-01" db="EMBL/GenBank/DDBJ databases">
        <title>Sequence of minutes 4-25 of Escherichia coli.</title>
        <authorList>
            <person name="Chung E."/>
            <person name="Allen E."/>
            <person name="Araujo R."/>
            <person name="Aparicio A.M."/>
            <person name="Davis K."/>
            <person name="Duncan M."/>
            <person name="Federspiel N."/>
            <person name="Hyman R."/>
            <person name="Kalman S."/>
            <person name="Komp C."/>
            <person name="Kurdi O."/>
            <person name="Lew H."/>
            <person name="Lin D."/>
            <person name="Namath A."/>
            <person name="Oefner P."/>
            <person name="Roberts D."/>
            <person name="Schramm S."/>
            <person name="Davis R.W."/>
        </authorList>
    </citation>
    <scope>NUCLEOTIDE SEQUENCE [LARGE SCALE GENOMIC DNA]</scope>
    <source>
        <strain>K12 / MG1655 / ATCC 47076</strain>
    </source>
</reference>
<reference key="3">
    <citation type="journal article" date="1997" name="Science">
        <title>The complete genome sequence of Escherichia coli K-12.</title>
        <authorList>
            <person name="Blattner F.R."/>
            <person name="Plunkett G. III"/>
            <person name="Bloch C.A."/>
            <person name="Perna N.T."/>
            <person name="Burland V."/>
            <person name="Riley M."/>
            <person name="Collado-Vides J."/>
            <person name="Glasner J.D."/>
            <person name="Rode C.K."/>
            <person name="Mayhew G.F."/>
            <person name="Gregor J."/>
            <person name="Davis N.W."/>
            <person name="Kirkpatrick H.A."/>
            <person name="Goeden M.A."/>
            <person name="Rose D.J."/>
            <person name="Mau B."/>
            <person name="Shao Y."/>
        </authorList>
    </citation>
    <scope>NUCLEOTIDE SEQUENCE [LARGE SCALE GENOMIC DNA]</scope>
    <source>
        <strain>K12 / MG1655 / ATCC 47076</strain>
    </source>
</reference>
<reference key="4">
    <citation type="journal article" date="2006" name="Mol. Syst. Biol.">
        <title>Highly accurate genome sequences of Escherichia coli K-12 strains MG1655 and W3110.</title>
        <authorList>
            <person name="Hayashi K."/>
            <person name="Morooka N."/>
            <person name="Yamamoto Y."/>
            <person name="Fujita K."/>
            <person name="Isono K."/>
            <person name="Choi S."/>
            <person name="Ohtsubo E."/>
            <person name="Baba T."/>
            <person name="Wanner B.L."/>
            <person name="Mori H."/>
            <person name="Horiuchi T."/>
        </authorList>
    </citation>
    <scope>NUCLEOTIDE SEQUENCE [LARGE SCALE GENOMIC DNA]</scope>
    <source>
        <strain>K12 / W3110 / ATCC 27325 / DSM 5911</strain>
    </source>
</reference>
<reference key="5">
    <citation type="journal article" date="1999" name="EMBO J.">
        <title>Protection of Escherichia coli cells against extreme turgor by activation of MscS and MscL mechanosensitive channels: identification of genes required for MscS activity.</title>
        <authorList>
            <person name="Levina N."/>
            <person name="Toetemeyer S."/>
            <person name="Stokes N.R."/>
            <person name="Louis P."/>
            <person name="Jones M.A."/>
            <person name="Booth I.R."/>
        </authorList>
    </citation>
    <scope>FUNCTION</scope>
    <source>
        <strain>K12 / MJF379</strain>
    </source>
</reference>
<reference key="6">
    <citation type="journal article" date="2002" name="EMBO J.">
        <title>Ionic regulation of MscK, a mechanosensitive channel from Escherichia coli.</title>
        <authorList>
            <person name="Li Y."/>
            <person name="Moe P.C."/>
            <person name="Chandrasekaran S."/>
            <person name="Booth I.R."/>
            <person name="Blount P."/>
        </authorList>
    </citation>
    <scope>FUNCTION</scope>
    <scope>GENE NAME</scope>
</reference>
<reference key="7">
    <citation type="journal article" date="2002" name="Mol. Microbiol.">
        <title>Analysis of the kefA2 mutation suggests that KefA is a cation-specific channel involved in osmotic adaptation in Escherichia coli.</title>
        <authorList>
            <person name="McLaggan D."/>
            <person name="Jones M.A."/>
            <person name="Gouesbet G."/>
            <person name="Levina N."/>
            <person name="Lindey S."/>
            <person name="Epstein W."/>
            <person name="Booth I.R."/>
        </authorList>
    </citation>
    <scope>FUNCTION</scope>
    <scope>SUBCELLULAR LOCATION</scope>
    <scope>TOPOLOGY</scope>
    <scope>MUTAGENESIS OF GLY-922</scope>
    <source>
        <strain>K12</strain>
    </source>
</reference>
<reference key="8">
    <citation type="journal article" date="2005" name="Science">
        <title>Global topology analysis of the Escherichia coli inner membrane proteome.</title>
        <authorList>
            <person name="Daley D.O."/>
            <person name="Rapp M."/>
            <person name="Granseth E."/>
            <person name="Melen K."/>
            <person name="Drew D."/>
            <person name="von Heijne G."/>
        </authorList>
    </citation>
    <scope>SUBCELLULAR LOCATION</scope>
    <source>
        <strain>K12 / MG1655 / ATCC 47076</strain>
    </source>
</reference>
<gene>
    <name type="primary">mscK</name>
    <name type="synonym">aefA</name>
    <name type="synonym">kefA</name>
    <name type="ordered locus">b0465</name>
    <name type="ordered locus">JW0454</name>
</gene>
<feature type="signal peptide" evidence="1">
    <location>
        <begin position="1"/>
        <end position="33"/>
    </location>
</feature>
<feature type="chain" id="PRO_0000043366" description="Mechanosensitive channel MscK">
    <location>
        <begin position="34"/>
        <end position="1120"/>
    </location>
</feature>
<feature type="topological domain" description="Periplasmic" evidence="1">
    <location>
        <begin position="34"/>
        <end position="499"/>
    </location>
</feature>
<feature type="transmembrane region" description="Helical" evidence="1">
    <location>
        <begin position="500"/>
        <end position="520"/>
    </location>
</feature>
<feature type="topological domain" description="Cytoplasmic" evidence="1">
    <location>
        <begin position="521"/>
        <end position="560"/>
    </location>
</feature>
<feature type="transmembrane region" description="Helical" evidence="1">
    <location>
        <begin position="561"/>
        <end position="581"/>
    </location>
</feature>
<feature type="topological domain" description="Periplasmic" evidence="1">
    <location>
        <position position="582"/>
    </location>
</feature>
<feature type="transmembrane region" description="Helical" evidence="1">
    <location>
        <begin position="583"/>
        <end position="603"/>
    </location>
</feature>
<feature type="topological domain" description="Cytoplasmic" evidence="1">
    <location>
        <begin position="604"/>
        <end position="634"/>
    </location>
</feature>
<feature type="transmembrane region" description="Helical" evidence="1">
    <location>
        <begin position="635"/>
        <end position="655"/>
    </location>
</feature>
<feature type="topological domain" description="Periplasmic" evidence="1">
    <location>
        <begin position="656"/>
        <end position="657"/>
    </location>
</feature>
<feature type="transmembrane region" description="Helical" evidence="1">
    <location>
        <begin position="658"/>
        <end position="678"/>
    </location>
</feature>
<feature type="topological domain" description="Cytoplasmic" evidence="1">
    <location>
        <begin position="679"/>
        <end position="692"/>
    </location>
</feature>
<feature type="transmembrane region" description="Helical" evidence="1">
    <location>
        <begin position="693"/>
        <end position="713"/>
    </location>
</feature>
<feature type="topological domain" description="Periplasmic" evidence="1">
    <location>
        <begin position="714"/>
        <end position="728"/>
    </location>
</feature>
<feature type="transmembrane region" description="Helical" evidence="1">
    <location>
        <begin position="729"/>
        <end position="749"/>
    </location>
</feature>
<feature type="topological domain" description="Cytoplasmic" evidence="1">
    <location>
        <begin position="750"/>
        <end position="796"/>
    </location>
</feature>
<feature type="transmembrane region" description="Helical" evidence="1">
    <location>
        <begin position="797"/>
        <end position="817"/>
    </location>
</feature>
<feature type="topological domain" description="Periplasmic" evidence="1">
    <location>
        <begin position="818"/>
        <end position="839"/>
    </location>
</feature>
<feature type="transmembrane region" description="Helical" evidence="1">
    <location>
        <begin position="840"/>
        <end position="860"/>
    </location>
</feature>
<feature type="topological domain" description="Cytoplasmic" evidence="1">
    <location>
        <begin position="861"/>
        <end position="886"/>
    </location>
</feature>
<feature type="transmembrane region" description="Helical" evidence="1">
    <location>
        <begin position="887"/>
        <end position="907"/>
    </location>
</feature>
<feature type="topological domain" description="Periplasmic" evidence="1">
    <location>
        <begin position="908"/>
        <end position="921"/>
    </location>
</feature>
<feature type="transmembrane region" description="Helical" evidence="1">
    <location>
        <begin position="922"/>
        <end position="942"/>
    </location>
</feature>
<feature type="topological domain" description="Cytoplasmic" evidence="1">
    <location>
        <begin position="943"/>
        <end position="1120"/>
    </location>
</feature>
<feature type="coiled-coil region" evidence="1">
    <location>
        <begin position="43"/>
        <end position="98"/>
    </location>
</feature>
<feature type="coiled-coil region" evidence="1">
    <location>
        <begin position="126"/>
        <end position="266"/>
    </location>
</feature>
<feature type="coiled-coil region" evidence="1">
    <location>
        <begin position="360"/>
        <end position="422"/>
    </location>
</feature>
<feature type="coiled-coil region" evidence="1">
    <location>
        <begin position="1057"/>
        <end position="1081"/>
    </location>
</feature>
<feature type="mutagenesis site" description="Prevents growth in medium containing high levels of potassium in the presence of betaine." evidence="3">
    <original>G</original>
    <variation>S</variation>
    <location>
        <position position="922"/>
    </location>
</feature>
<feature type="helix" evidence="7">
    <location>
        <begin position="287"/>
        <end position="336"/>
    </location>
</feature>
<feature type="helix" evidence="7">
    <location>
        <begin position="344"/>
        <end position="355"/>
    </location>
</feature>
<feature type="helix" evidence="7">
    <location>
        <begin position="359"/>
        <end position="361"/>
    </location>
</feature>
<feature type="helix" evidence="7">
    <location>
        <begin position="366"/>
        <end position="385"/>
    </location>
</feature>
<feature type="helix" evidence="7">
    <location>
        <begin position="389"/>
        <end position="397"/>
    </location>
</feature>
<feature type="helix" evidence="7">
    <location>
        <begin position="406"/>
        <end position="463"/>
    </location>
</feature>
<feature type="helix" evidence="7">
    <location>
        <begin position="475"/>
        <end position="490"/>
    </location>
</feature>
<feature type="helix" evidence="7">
    <location>
        <begin position="506"/>
        <end position="535"/>
    </location>
</feature>
<feature type="helix" evidence="7">
    <location>
        <begin position="550"/>
        <end position="574"/>
    </location>
</feature>
<feature type="helix" evidence="7">
    <location>
        <begin position="583"/>
        <end position="603"/>
    </location>
</feature>
<feature type="helix" evidence="7">
    <location>
        <begin position="623"/>
        <end position="644"/>
    </location>
</feature>
<feature type="turn" evidence="7">
    <location>
        <begin position="645"/>
        <end position="647"/>
    </location>
</feature>
<feature type="helix" evidence="7">
    <location>
        <begin position="661"/>
        <end position="683"/>
    </location>
</feature>
<feature type="strand" evidence="7">
    <location>
        <begin position="686"/>
        <end position="688"/>
    </location>
</feature>
<feature type="helix" evidence="7">
    <location>
        <begin position="691"/>
        <end position="709"/>
    </location>
</feature>
<feature type="helix" evidence="7">
    <location>
        <begin position="717"/>
        <end position="720"/>
    </location>
</feature>
<feature type="helix" evidence="7">
    <location>
        <begin position="721"/>
        <end position="753"/>
    </location>
</feature>
<feature type="helix" evidence="7">
    <location>
        <begin position="788"/>
        <end position="810"/>
    </location>
</feature>
<feature type="helix" evidence="7">
    <location>
        <begin position="813"/>
        <end position="820"/>
    </location>
</feature>
<feature type="strand" evidence="7">
    <location>
        <begin position="826"/>
        <end position="832"/>
    </location>
</feature>
<feature type="strand" evidence="7">
    <location>
        <begin position="835"/>
        <end position="840"/>
    </location>
</feature>
<feature type="helix" evidence="7">
    <location>
        <begin position="843"/>
        <end position="872"/>
    </location>
</feature>
<feature type="turn" evidence="7">
    <location>
        <begin position="873"/>
        <end position="875"/>
    </location>
</feature>
<feature type="strand" evidence="7">
    <location>
        <begin position="877"/>
        <end position="880"/>
    </location>
</feature>
<feature type="helix" evidence="7">
    <location>
        <begin position="881"/>
        <end position="905"/>
    </location>
</feature>
<feature type="helix" evidence="7">
    <location>
        <begin position="907"/>
        <end position="909"/>
    </location>
</feature>
<feature type="turn" evidence="7">
    <location>
        <begin position="910"/>
        <end position="914"/>
    </location>
</feature>
<feature type="helix" evidence="7">
    <location>
        <begin position="915"/>
        <end position="943"/>
    </location>
</feature>
<feature type="strand" evidence="7">
    <location>
        <begin position="951"/>
        <end position="956"/>
    </location>
</feature>
<feature type="strand" evidence="7">
    <location>
        <begin position="958"/>
        <end position="964"/>
    </location>
</feature>
<feature type="strand" evidence="7">
    <location>
        <begin position="969"/>
        <end position="973"/>
    </location>
</feature>
<feature type="strand" evidence="7">
    <location>
        <begin position="978"/>
        <end position="981"/>
    </location>
</feature>
<feature type="helix" evidence="7">
    <location>
        <begin position="983"/>
        <end position="988"/>
    </location>
</feature>
<feature type="strand" evidence="7">
    <location>
        <begin position="991"/>
        <end position="998"/>
    </location>
</feature>
<feature type="strand" evidence="7">
    <location>
        <begin position="1001"/>
        <end position="1009"/>
    </location>
</feature>
<feature type="helix" evidence="7">
    <location>
        <begin position="1017"/>
        <end position="1027"/>
    </location>
</feature>
<feature type="strand" evidence="7">
    <location>
        <begin position="1034"/>
        <end position="1036"/>
    </location>
</feature>
<feature type="strand" evidence="7">
    <location>
        <begin position="1039"/>
        <end position="1045"/>
    </location>
</feature>
<feature type="strand" evidence="7">
    <location>
        <begin position="1047"/>
        <end position="1060"/>
    </location>
</feature>
<feature type="helix" evidence="7">
    <location>
        <begin position="1061"/>
        <end position="1063"/>
    </location>
</feature>
<feature type="helix" evidence="7">
    <location>
        <begin position="1064"/>
        <end position="1082"/>
    </location>
</feature>
<feature type="strand" evidence="7">
    <location>
        <begin position="1090"/>
        <end position="1096"/>
    </location>
</feature>
<name>MSCK_ECOLI</name>
<protein>
    <recommendedName>
        <fullName>Mechanosensitive channel MscK</fullName>
    </recommendedName>
    <alternativeName>
        <fullName>Potassium efflux system KefA</fullName>
    </alternativeName>
</protein>
<dbReference type="EMBL" id="Y07802">
    <property type="protein sequence ID" value="CAA69140.1"/>
    <property type="molecule type" value="Genomic_DNA"/>
</dbReference>
<dbReference type="EMBL" id="U82664">
    <property type="protein sequence ID" value="AAB40219.1"/>
    <property type="molecule type" value="Genomic_DNA"/>
</dbReference>
<dbReference type="EMBL" id="U00096">
    <property type="protein sequence ID" value="AAC73567.1"/>
    <property type="molecule type" value="Genomic_DNA"/>
</dbReference>
<dbReference type="EMBL" id="AP009048">
    <property type="protein sequence ID" value="BAE76244.1"/>
    <property type="molecule type" value="Genomic_DNA"/>
</dbReference>
<dbReference type="PIR" id="H64776">
    <property type="entry name" value="H64776"/>
</dbReference>
<dbReference type="RefSeq" id="NP_414998.1">
    <property type="nucleotide sequence ID" value="NC_000913.3"/>
</dbReference>
<dbReference type="RefSeq" id="WP_000177732.1">
    <property type="nucleotide sequence ID" value="NZ_SSZK01000009.1"/>
</dbReference>
<dbReference type="PDB" id="7UW5">
    <property type="method" value="EM"/>
    <property type="resolution" value="3.84 A"/>
    <property type="chains" value="A/B/C/D/E/F/G=1-1120"/>
</dbReference>
<dbReference type="PDB" id="7UX1">
    <property type="method" value="EM"/>
    <property type="resolution" value="3.48 A"/>
    <property type="chains" value="A/B/C/D/E/F/G=1-1120"/>
</dbReference>
<dbReference type="PDBsum" id="7UW5"/>
<dbReference type="PDBsum" id="7UX1"/>
<dbReference type="EMDB" id="EMD-26823"/>
<dbReference type="EMDB" id="EMD-26845"/>
<dbReference type="EMDB" id="EMD-26851"/>
<dbReference type="EMDB" id="EMD-26854"/>
<dbReference type="EMDB" id="EMD-26872"/>
<dbReference type="EMDB" id="EMD-26875"/>
<dbReference type="EMDB" id="EMD-26876"/>
<dbReference type="EMDB" id="EMD-26877"/>
<dbReference type="SMR" id="P77338"/>
<dbReference type="BioGRID" id="4259842">
    <property type="interactions" value="275"/>
</dbReference>
<dbReference type="DIP" id="DIP-10070N"/>
<dbReference type="FunCoup" id="P77338">
    <property type="interactions" value="89"/>
</dbReference>
<dbReference type="IntAct" id="P77338">
    <property type="interactions" value="3"/>
</dbReference>
<dbReference type="STRING" id="511145.b0465"/>
<dbReference type="TCDB" id="1.A.23.1.1">
    <property type="family name" value="the small conductance mechanosensitive ion channel (mscs) family"/>
</dbReference>
<dbReference type="jPOST" id="P77338"/>
<dbReference type="PaxDb" id="511145-b0465"/>
<dbReference type="EnsemblBacteria" id="AAC73567">
    <property type="protein sequence ID" value="AAC73567"/>
    <property type="gene ID" value="b0465"/>
</dbReference>
<dbReference type="GeneID" id="945132"/>
<dbReference type="KEGG" id="ecj:JW0454"/>
<dbReference type="KEGG" id="eco:b0465"/>
<dbReference type="KEGG" id="ecoc:C3026_02280"/>
<dbReference type="PATRIC" id="fig|1411691.4.peg.1811"/>
<dbReference type="EchoBASE" id="EB3991"/>
<dbReference type="eggNOG" id="COG1196">
    <property type="taxonomic scope" value="Bacteria"/>
</dbReference>
<dbReference type="eggNOG" id="COG3264">
    <property type="taxonomic scope" value="Bacteria"/>
</dbReference>
<dbReference type="HOGENOM" id="CLU_007829_3_0_6"/>
<dbReference type="InParanoid" id="P77338"/>
<dbReference type="OMA" id="YWVWSDL"/>
<dbReference type="OrthoDB" id="9799209at2"/>
<dbReference type="PhylomeDB" id="P77338"/>
<dbReference type="BioCyc" id="EcoCyc:G6255-MONOMER"/>
<dbReference type="BioCyc" id="MetaCyc:G6255-MONOMER"/>
<dbReference type="PRO" id="PR:P77338"/>
<dbReference type="Proteomes" id="UP000000625">
    <property type="component" value="Chromosome"/>
</dbReference>
<dbReference type="GO" id="GO:0005886">
    <property type="term" value="C:plasma membrane"/>
    <property type="evidence" value="ECO:0000314"/>
    <property type="project" value="EcoCyc"/>
</dbReference>
<dbReference type="GO" id="GO:0008381">
    <property type="term" value="F:mechanosensitive monoatomic ion channel activity"/>
    <property type="evidence" value="ECO:0000314"/>
    <property type="project" value="EcoCyc"/>
</dbReference>
<dbReference type="GO" id="GO:0009992">
    <property type="term" value="P:intracellular water homeostasis"/>
    <property type="evidence" value="ECO:0000315"/>
    <property type="project" value="EcoCyc"/>
</dbReference>
<dbReference type="GO" id="GO:0006813">
    <property type="term" value="P:potassium ion transport"/>
    <property type="evidence" value="ECO:0007669"/>
    <property type="project" value="UniProtKB-KW"/>
</dbReference>
<dbReference type="GO" id="GO:0035864">
    <property type="term" value="P:response to potassium ion"/>
    <property type="evidence" value="ECO:0000314"/>
    <property type="project" value="EcoCyc"/>
</dbReference>
<dbReference type="FunFam" id="2.30.30.60:FF:000001">
    <property type="entry name" value="MscS Mechanosensitive ion channel"/>
    <property type="match status" value="1"/>
</dbReference>
<dbReference type="FunFam" id="1.10.287.1260:FF:000002">
    <property type="entry name" value="Potassium efflux system KefA"/>
    <property type="match status" value="1"/>
</dbReference>
<dbReference type="FunFam" id="3.30.70.100:FF:000015">
    <property type="entry name" value="Potassium efflux system KefA"/>
    <property type="match status" value="1"/>
</dbReference>
<dbReference type="Gene3D" id="1.10.287.1260">
    <property type="match status" value="1"/>
</dbReference>
<dbReference type="Gene3D" id="2.30.30.60">
    <property type="match status" value="1"/>
</dbReference>
<dbReference type="Gene3D" id="3.30.70.100">
    <property type="match status" value="1"/>
</dbReference>
<dbReference type="InterPro" id="IPR023298">
    <property type="entry name" value="ATPase_P-typ_TM_dom_sf"/>
</dbReference>
<dbReference type="InterPro" id="IPR010920">
    <property type="entry name" value="LSM_dom_sf"/>
</dbReference>
<dbReference type="InterPro" id="IPR049142">
    <property type="entry name" value="MS_channel_1st"/>
</dbReference>
<dbReference type="InterPro" id="IPR049278">
    <property type="entry name" value="MS_channel_C"/>
</dbReference>
<dbReference type="InterPro" id="IPR052702">
    <property type="entry name" value="MscS-like_channel"/>
</dbReference>
<dbReference type="InterPro" id="IPR023408">
    <property type="entry name" value="MscS_beta-dom_sf"/>
</dbReference>
<dbReference type="InterPro" id="IPR006685">
    <property type="entry name" value="MscS_channel_2nd"/>
</dbReference>
<dbReference type="InterPro" id="IPR011066">
    <property type="entry name" value="MscS_channel_C_sf"/>
</dbReference>
<dbReference type="InterPro" id="IPR006686">
    <property type="entry name" value="MscS_channel_CS"/>
</dbReference>
<dbReference type="InterPro" id="IPR011014">
    <property type="entry name" value="MscS_channel_TM-2"/>
</dbReference>
<dbReference type="InterPro" id="IPR025692">
    <property type="entry name" value="MscS_IM_dom1"/>
</dbReference>
<dbReference type="InterPro" id="IPR024393">
    <property type="entry name" value="MscS_porin"/>
</dbReference>
<dbReference type="NCBIfam" id="NF008438">
    <property type="entry name" value="PRK11281.1"/>
    <property type="match status" value="1"/>
</dbReference>
<dbReference type="PANTHER" id="PTHR30347:SF1">
    <property type="entry name" value="MECHANOSENSITIVE CHANNEL MSCK"/>
    <property type="match status" value="1"/>
</dbReference>
<dbReference type="PANTHER" id="PTHR30347">
    <property type="entry name" value="POTASSIUM CHANNEL RELATED"/>
    <property type="match status" value="1"/>
</dbReference>
<dbReference type="Pfam" id="PF21088">
    <property type="entry name" value="MS_channel_1st"/>
    <property type="match status" value="1"/>
</dbReference>
<dbReference type="Pfam" id="PF00924">
    <property type="entry name" value="MS_channel_2nd"/>
    <property type="match status" value="1"/>
</dbReference>
<dbReference type="Pfam" id="PF21082">
    <property type="entry name" value="MS_channel_3rd"/>
    <property type="match status" value="1"/>
</dbReference>
<dbReference type="Pfam" id="PF12795">
    <property type="entry name" value="MscS_porin"/>
    <property type="match status" value="1"/>
</dbReference>
<dbReference type="Pfam" id="PF12794">
    <property type="entry name" value="MscS_TM"/>
    <property type="match status" value="1"/>
</dbReference>
<dbReference type="SUPFAM" id="SSF81665">
    <property type="entry name" value="Calcium ATPase, transmembrane domain M"/>
    <property type="match status" value="1"/>
</dbReference>
<dbReference type="SUPFAM" id="SSF82689">
    <property type="entry name" value="Mechanosensitive channel protein MscS (YggB), C-terminal domain"/>
    <property type="match status" value="1"/>
</dbReference>
<dbReference type="SUPFAM" id="SSF82861">
    <property type="entry name" value="Mechanosensitive channel protein MscS (YggB), transmembrane region"/>
    <property type="match status" value="1"/>
</dbReference>
<dbReference type="SUPFAM" id="SSF50182">
    <property type="entry name" value="Sm-like ribonucleoproteins"/>
    <property type="match status" value="1"/>
</dbReference>
<dbReference type="PROSITE" id="PS01246">
    <property type="entry name" value="UPF0003"/>
    <property type="match status" value="1"/>
</dbReference>
<comment type="function">
    <text evidence="2 3 4">Mechanosensitive channel that opens in response to membrane tension and specific ionic conditions. Requires high concentrations of external K(+), NH(4)(+), Rb(+) or Cs(+) to gate. May participate in the regulation of osmotic pressure changes within the cell, although it does not appear to have a major role in osmolarity regulation. Forms an ion channel of 1.0 nanosiemens conductance. The channel can remain active for between 30 seconds and over 3 minutes; it does not desensitize upon extended pressure. Its activity is masked in wild-type cells by the MscS channel.</text>
</comment>
<comment type="subcellular location">
    <subcellularLocation>
        <location evidence="3 5">Cell inner membrane</location>
        <topology evidence="3 5">Multi-pass membrane protein</topology>
    </subcellularLocation>
</comment>
<comment type="similarity">
    <text evidence="6">Belongs to the MscS (TC 1.A.23) family.</text>
</comment>
<proteinExistence type="evidence at protein level"/>
<evidence type="ECO:0000255" key="1"/>
<evidence type="ECO:0000269" key="2">
    <source>
    </source>
</evidence>
<evidence type="ECO:0000269" key="3">
    <source>
    </source>
</evidence>
<evidence type="ECO:0000269" key="4">
    <source>
    </source>
</evidence>
<evidence type="ECO:0000269" key="5">
    <source>
    </source>
</evidence>
<evidence type="ECO:0000305" key="6"/>
<evidence type="ECO:0007829" key="7">
    <source>
        <dbReference type="PDB" id="7UX1"/>
    </source>
</evidence>
<keyword id="KW-0002">3D-structure</keyword>
<keyword id="KW-0997">Cell inner membrane</keyword>
<keyword id="KW-1003">Cell membrane</keyword>
<keyword id="KW-0175">Coiled coil</keyword>
<keyword id="KW-0406">Ion transport</keyword>
<keyword id="KW-0472">Membrane</keyword>
<keyword id="KW-0630">Potassium</keyword>
<keyword id="KW-0633">Potassium transport</keyword>
<keyword id="KW-1185">Reference proteome</keyword>
<keyword id="KW-0732">Signal</keyword>
<keyword id="KW-0812">Transmembrane</keyword>
<keyword id="KW-1133">Transmembrane helix</keyword>
<keyword id="KW-0813">Transport</keyword>